<name>YQF7_CAEEL</name>
<sequence length="284" mass="31486">MLHNIQSILQFLLFVSSVQALETGGLKSKPPNLKLLECFEFKKNYWIVGHAFHTSSVQFKDECLRMCLTSSIRKAKCLSAMHVPNDDECVISDQNQVTKPDLFIENDTPGTFTVNFFRNICVDPPDAEGVDRFEARLQGYKGGEGIIEFAQAVGKNTQVMVVISGLKENSLYEINFLPDTKEKGGQCHRKSRVNGEGKTLMIVETDHTGMAVEPWKVIDFDGFEENVISKTIVVVEKSTQTIVDCGSIRLATASSNSSTTRTSSSTGLKFTTGLLIILVVFLFL</sequence>
<feature type="signal peptide" evidence="1">
    <location>
        <begin position="1"/>
        <end position="20"/>
    </location>
</feature>
<feature type="chain" id="PRO_0000065222" description="Uncharacterized protein C34C12.7">
    <location>
        <begin position="21"/>
        <end position="284"/>
    </location>
</feature>
<feature type="transmembrane region" description="Helical" evidence="1">
    <location>
        <begin position="264"/>
        <end position="284"/>
    </location>
</feature>
<feature type="domain" description="Apple" evidence="2">
    <location>
        <begin position="38"/>
        <end position="121"/>
    </location>
</feature>
<feature type="glycosylation site" description="N-linked (GlcNAc...) asparagine" evidence="1">
    <location>
        <position position="256"/>
    </location>
</feature>
<feature type="disulfide bond" evidence="2">
    <location>
        <begin position="38"/>
        <end position="121"/>
    </location>
</feature>
<feature type="disulfide bond" evidence="2">
    <location>
        <begin position="63"/>
        <end position="89"/>
    </location>
</feature>
<feature type="disulfide bond" evidence="2">
    <location>
        <begin position="67"/>
        <end position="77"/>
    </location>
</feature>
<accession>Q09271</accession>
<accession>C1P628</accession>
<gene>
    <name type="ORF">C34C12.7</name>
</gene>
<proteinExistence type="inferred from homology"/>
<comment type="subcellular location">
    <subcellularLocation>
        <location evidence="3">Membrane</location>
        <topology evidence="3">Single-pass membrane protein</topology>
    </subcellularLocation>
</comment>
<dbReference type="EMBL" id="Z46996">
    <property type="protein sequence ID" value="CAA87098.2"/>
    <property type="molecule type" value="Genomic_DNA"/>
</dbReference>
<dbReference type="EMBL" id="Z46381">
    <property type="protein sequence ID" value="CAA87098.2"/>
    <property type="status" value="JOINED"/>
    <property type="molecule type" value="Genomic_DNA"/>
</dbReference>
<dbReference type="PIR" id="T19699">
    <property type="entry name" value="T19699"/>
</dbReference>
<dbReference type="RefSeq" id="NP_497718.2">
    <property type="nucleotide sequence ID" value="NM_065317.4"/>
</dbReference>
<dbReference type="FunCoup" id="Q09271">
    <property type="interactions" value="66"/>
</dbReference>
<dbReference type="STRING" id="6239.C34C12.7.1"/>
<dbReference type="PaxDb" id="6239-C34C12.7"/>
<dbReference type="PeptideAtlas" id="Q09271"/>
<dbReference type="EnsemblMetazoa" id="C34C12.7.1">
    <property type="protein sequence ID" value="C34C12.7.1"/>
    <property type="gene ID" value="WBGene00007926"/>
</dbReference>
<dbReference type="GeneID" id="183201"/>
<dbReference type="KEGG" id="cel:CELE_C34C12.7"/>
<dbReference type="UCSC" id="C34C12.7">
    <property type="organism name" value="c. elegans"/>
</dbReference>
<dbReference type="AGR" id="WB:WBGene00007926"/>
<dbReference type="CTD" id="183201"/>
<dbReference type="WormBase" id="C34C12.7">
    <property type="protein sequence ID" value="CE43649"/>
    <property type="gene ID" value="WBGene00007926"/>
</dbReference>
<dbReference type="eggNOG" id="ENOG502SEPT">
    <property type="taxonomic scope" value="Eukaryota"/>
</dbReference>
<dbReference type="HOGENOM" id="CLU_084866_0_0_1"/>
<dbReference type="InParanoid" id="Q09271"/>
<dbReference type="OMA" id="CRSLMHM"/>
<dbReference type="OrthoDB" id="5849052at2759"/>
<dbReference type="PRO" id="PR:Q09271"/>
<dbReference type="Proteomes" id="UP000001940">
    <property type="component" value="Chromosome III"/>
</dbReference>
<dbReference type="Bgee" id="WBGene00007926">
    <property type="expression patterns" value="Expressed in material anatomical entity and 4 other cell types or tissues"/>
</dbReference>
<dbReference type="GO" id="GO:0016020">
    <property type="term" value="C:membrane"/>
    <property type="evidence" value="ECO:0007669"/>
    <property type="project" value="UniProtKB-SubCell"/>
</dbReference>
<dbReference type="CDD" id="cd01099">
    <property type="entry name" value="PAN_AP_HGF"/>
    <property type="match status" value="1"/>
</dbReference>
<dbReference type="Gene3D" id="3.50.4.10">
    <property type="entry name" value="Hepatocyte Growth Factor"/>
    <property type="match status" value="1"/>
</dbReference>
<dbReference type="InterPro" id="IPR003609">
    <property type="entry name" value="Pan_app"/>
</dbReference>
<dbReference type="Pfam" id="PF00024">
    <property type="entry name" value="PAN_1"/>
    <property type="match status" value="1"/>
</dbReference>
<dbReference type="SUPFAM" id="SSF57414">
    <property type="entry name" value="Hairpin loop containing domain-like"/>
    <property type="match status" value="1"/>
</dbReference>
<dbReference type="PROSITE" id="PS50948">
    <property type="entry name" value="PAN"/>
    <property type="match status" value="1"/>
</dbReference>
<protein>
    <recommendedName>
        <fullName>Uncharacterized protein C34C12.7</fullName>
    </recommendedName>
</protein>
<organism>
    <name type="scientific">Caenorhabditis elegans</name>
    <dbReference type="NCBI Taxonomy" id="6239"/>
    <lineage>
        <taxon>Eukaryota</taxon>
        <taxon>Metazoa</taxon>
        <taxon>Ecdysozoa</taxon>
        <taxon>Nematoda</taxon>
        <taxon>Chromadorea</taxon>
        <taxon>Rhabditida</taxon>
        <taxon>Rhabditina</taxon>
        <taxon>Rhabditomorpha</taxon>
        <taxon>Rhabditoidea</taxon>
        <taxon>Rhabditidae</taxon>
        <taxon>Peloderinae</taxon>
        <taxon>Caenorhabditis</taxon>
    </lineage>
</organism>
<keyword id="KW-1015">Disulfide bond</keyword>
<keyword id="KW-0325">Glycoprotein</keyword>
<keyword id="KW-0472">Membrane</keyword>
<keyword id="KW-1185">Reference proteome</keyword>
<keyword id="KW-0732">Signal</keyword>
<keyword id="KW-0812">Transmembrane</keyword>
<keyword id="KW-1133">Transmembrane helix</keyword>
<reference key="1">
    <citation type="journal article" date="1998" name="Science">
        <title>Genome sequence of the nematode C. elegans: a platform for investigating biology.</title>
        <authorList>
            <consortium name="The C. elegans sequencing consortium"/>
        </authorList>
    </citation>
    <scope>NUCLEOTIDE SEQUENCE [LARGE SCALE GENOMIC DNA]</scope>
    <source>
        <strain>Bristol N2</strain>
    </source>
</reference>
<evidence type="ECO:0000255" key="1"/>
<evidence type="ECO:0000255" key="2">
    <source>
        <dbReference type="PROSITE-ProRule" id="PRU00315"/>
    </source>
</evidence>
<evidence type="ECO:0000305" key="3"/>